<protein>
    <recommendedName>
        <fullName evidence="1">GTPase Obg</fullName>
        <ecNumber evidence="1">3.6.5.-</ecNumber>
    </recommendedName>
    <alternativeName>
        <fullName evidence="1">GTP-binding protein Obg</fullName>
    </alternativeName>
</protein>
<proteinExistence type="inferred from homology"/>
<sequence length="331" mass="34899">MQFIDQARIAVKAGRGGDGICAFRREKYVPAGGPSGGDGGRGGDVVLQADSNLQTLLDFKYKRLFQADDGRRGGPNRSTGASANTLLIRVPCGTEVRDLGTDLLLGDLTDNGEQLMIATGGKGGLGNAHYLSNRNRAPEKFTEGKDGEERELQLELKLLAEVGLVGLPNAGKSTLISVLSAARPKIADYPFTTLVPNLGVVRRPSGDGTVFADIPGLIAGAAQGAGLGHDFLRHIERTRVLIHLVDGSSPDPIADAQVLLGELEAYGNGLLERPRLLVLSKSELLDEEQLEALPAQLSDTLGQPVQVISAVTGQGLDGLLQQVWQELGVSS</sequence>
<dbReference type="EC" id="3.6.5.-" evidence="1"/>
<dbReference type="EMBL" id="CT978603">
    <property type="protein sequence ID" value="CAK27214.1"/>
    <property type="molecule type" value="Genomic_DNA"/>
</dbReference>
<dbReference type="SMR" id="A5GQQ5"/>
<dbReference type="STRING" id="316278.SynRCC307_0311"/>
<dbReference type="KEGG" id="syr:SynRCC307_0311"/>
<dbReference type="eggNOG" id="COG0536">
    <property type="taxonomic scope" value="Bacteria"/>
</dbReference>
<dbReference type="HOGENOM" id="CLU_011747_2_0_3"/>
<dbReference type="OrthoDB" id="9807318at2"/>
<dbReference type="Proteomes" id="UP000001115">
    <property type="component" value="Chromosome"/>
</dbReference>
<dbReference type="GO" id="GO:0005737">
    <property type="term" value="C:cytoplasm"/>
    <property type="evidence" value="ECO:0007669"/>
    <property type="project" value="UniProtKB-SubCell"/>
</dbReference>
<dbReference type="GO" id="GO:0005525">
    <property type="term" value="F:GTP binding"/>
    <property type="evidence" value="ECO:0007669"/>
    <property type="project" value="UniProtKB-UniRule"/>
</dbReference>
<dbReference type="GO" id="GO:0003924">
    <property type="term" value="F:GTPase activity"/>
    <property type="evidence" value="ECO:0007669"/>
    <property type="project" value="UniProtKB-UniRule"/>
</dbReference>
<dbReference type="GO" id="GO:0000287">
    <property type="term" value="F:magnesium ion binding"/>
    <property type="evidence" value="ECO:0007669"/>
    <property type="project" value="InterPro"/>
</dbReference>
<dbReference type="GO" id="GO:0042254">
    <property type="term" value="P:ribosome biogenesis"/>
    <property type="evidence" value="ECO:0007669"/>
    <property type="project" value="UniProtKB-UniRule"/>
</dbReference>
<dbReference type="CDD" id="cd01898">
    <property type="entry name" value="Obg"/>
    <property type="match status" value="1"/>
</dbReference>
<dbReference type="FunFam" id="2.70.210.12:FF:000001">
    <property type="entry name" value="GTPase Obg"/>
    <property type="match status" value="1"/>
</dbReference>
<dbReference type="Gene3D" id="2.70.210.12">
    <property type="entry name" value="GTP1/OBG domain"/>
    <property type="match status" value="1"/>
</dbReference>
<dbReference type="Gene3D" id="3.40.50.300">
    <property type="entry name" value="P-loop containing nucleotide triphosphate hydrolases"/>
    <property type="match status" value="1"/>
</dbReference>
<dbReference type="HAMAP" id="MF_01454">
    <property type="entry name" value="GTPase_Obg"/>
    <property type="match status" value="1"/>
</dbReference>
<dbReference type="InterPro" id="IPR031167">
    <property type="entry name" value="G_OBG"/>
</dbReference>
<dbReference type="InterPro" id="IPR006073">
    <property type="entry name" value="GTP-bd"/>
</dbReference>
<dbReference type="InterPro" id="IPR014100">
    <property type="entry name" value="GTP-bd_Obg/CgtA"/>
</dbReference>
<dbReference type="InterPro" id="IPR006169">
    <property type="entry name" value="GTP1_OBG_dom"/>
</dbReference>
<dbReference type="InterPro" id="IPR036726">
    <property type="entry name" value="GTP1_OBG_dom_sf"/>
</dbReference>
<dbReference type="InterPro" id="IPR045086">
    <property type="entry name" value="OBG_GTPase"/>
</dbReference>
<dbReference type="InterPro" id="IPR027417">
    <property type="entry name" value="P-loop_NTPase"/>
</dbReference>
<dbReference type="NCBIfam" id="TIGR02729">
    <property type="entry name" value="Obg_CgtA"/>
    <property type="match status" value="1"/>
</dbReference>
<dbReference type="NCBIfam" id="NF008955">
    <property type="entry name" value="PRK12297.1"/>
    <property type="match status" value="1"/>
</dbReference>
<dbReference type="NCBIfam" id="NF008956">
    <property type="entry name" value="PRK12299.1"/>
    <property type="match status" value="1"/>
</dbReference>
<dbReference type="PANTHER" id="PTHR11702">
    <property type="entry name" value="DEVELOPMENTALLY REGULATED GTP-BINDING PROTEIN-RELATED"/>
    <property type="match status" value="1"/>
</dbReference>
<dbReference type="PANTHER" id="PTHR11702:SF31">
    <property type="entry name" value="MITOCHONDRIAL RIBOSOME-ASSOCIATED GTPASE 2"/>
    <property type="match status" value="1"/>
</dbReference>
<dbReference type="Pfam" id="PF01018">
    <property type="entry name" value="GTP1_OBG"/>
    <property type="match status" value="1"/>
</dbReference>
<dbReference type="Pfam" id="PF01926">
    <property type="entry name" value="MMR_HSR1"/>
    <property type="match status" value="1"/>
</dbReference>
<dbReference type="PIRSF" id="PIRSF002401">
    <property type="entry name" value="GTP_bd_Obg/CgtA"/>
    <property type="match status" value="1"/>
</dbReference>
<dbReference type="PRINTS" id="PR00326">
    <property type="entry name" value="GTP1OBG"/>
</dbReference>
<dbReference type="SUPFAM" id="SSF82051">
    <property type="entry name" value="Obg GTP-binding protein N-terminal domain"/>
    <property type="match status" value="1"/>
</dbReference>
<dbReference type="SUPFAM" id="SSF52540">
    <property type="entry name" value="P-loop containing nucleoside triphosphate hydrolases"/>
    <property type="match status" value="1"/>
</dbReference>
<dbReference type="PROSITE" id="PS51710">
    <property type="entry name" value="G_OBG"/>
    <property type="match status" value="1"/>
</dbReference>
<dbReference type="PROSITE" id="PS51883">
    <property type="entry name" value="OBG"/>
    <property type="match status" value="1"/>
</dbReference>
<feature type="chain" id="PRO_0000386339" description="GTPase Obg">
    <location>
        <begin position="1"/>
        <end position="331"/>
    </location>
</feature>
<feature type="domain" description="Obg" evidence="2">
    <location>
        <begin position="1"/>
        <end position="159"/>
    </location>
</feature>
<feature type="domain" description="OBG-type G" evidence="1">
    <location>
        <begin position="160"/>
        <end position="328"/>
    </location>
</feature>
<feature type="binding site" evidence="1">
    <location>
        <begin position="166"/>
        <end position="173"/>
    </location>
    <ligand>
        <name>GTP</name>
        <dbReference type="ChEBI" id="CHEBI:37565"/>
    </ligand>
</feature>
<feature type="binding site" evidence="1">
    <location>
        <position position="173"/>
    </location>
    <ligand>
        <name>Mg(2+)</name>
        <dbReference type="ChEBI" id="CHEBI:18420"/>
    </ligand>
</feature>
<feature type="binding site" evidence="1">
    <location>
        <begin position="191"/>
        <end position="195"/>
    </location>
    <ligand>
        <name>GTP</name>
        <dbReference type="ChEBI" id="CHEBI:37565"/>
    </ligand>
</feature>
<feature type="binding site" evidence="1">
    <location>
        <position position="193"/>
    </location>
    <ligand>
        <name>Mg(2+)</name>
        <dbReference type="ChEBI" id="CHEBI:18420"/>
    </ligand>
</feature>
<feature type="binding site" evidence="1">
    <location>
        <begin position="213"/>
        <end position="216"/>
    </location>
    <ligand>
        <name>GTP</name>
        <dbReference type="ChEBI" id="CHEBI:37565"/>
    </ligand>
</feature>
<feature type="binding site" evidence="1">
    <location>
        <begin position="280"/>
        <end position="283"/>
    </location>
    <ligand>
        <name>GTP</name>
        <dbReference type="ChEBI" id="CHEBI:37565"/>
    </ligand>
</feature>
<feature type="binding site" evidence="1">
    <location>
        <begin position="309"/>
        <end position="311"/>
    </location>
    <ligand>
        <name>GTP</name>
        <dbReference type="ChEBI" id="CHEBI:37565"/>
    </ligand>
</feature>
<name>OBG_SYNR3</name>
<gene>
    <name evidence="1" type="primary">obg</name>
    <name type="ordered locus">SynRCC307_0311</name>
</gene>
<accession>A5GQQ5</accession>
<reference key="1">
    <citation type="submission" date="2006-05" db="EMBL/GenBank/DDBJ databases">
        <authorList>
            <consortium name="Genoscope"/>
        </authorList>
    </citation>
    <scope>NUCLEOTIDE SEQUENCE [LARGE SCALE GENOMIC DNA]</scope>
    <source>
        <strain>RCC307</strain>
    </source>
</reference>
<evidence type="ECO:0000255" key="1">
    <source>
        <dbReference type="HAMAP-Rule" id="MF_01454"/>
    </source>
</evidence>
<evidence type="ECO:0000255" key="2">
    <source>
        <dbReference type="PROSITE-ProRule" id="PRU01231"/>
    </source>
</evidence>
<keyword id="KW-0963">Cytoplasm</keyword>
<keyword id="KW-0342">GTP-binding</keyword>
<keyword id="KW-0378">Hydrolase</keyword>
<keyword id="KW-0460">Magnesium</keyword>
<keyword id="KW-0479">Metal-binding</keyword>
<keyword id="KW-0547">Nucleotide-binding</keyword>
<keyword id="KW-1185">Reference proteome</keyword>
<organism>
    <name type="scientific">Synechococcus sp. (strain RCC307)</name>
    <dbReference type="NCBI Taxonomy" id="316278"/>
    <lineage>
        <taxon>Bacteria</taxon>
        <taxon>Bacillati</taxon>
        <taxon>Cyanobacteriota</taxon>
        <taxon>Cyanophyceae</taxon>
        <taxon>Synechococcales</taxon>
        <taxon>Synechococcaceae</taxon>
        <taxon>Synechococcus</taxon>
    </lineage>
</organism>
<comment type="function">
    <text evidence="1">An essential GTPase which binds GTP, GDP and possibly (p)ppGpp with moderate affinity, with high nucleotide exchange rates and a fairly low GTP hydrolysis rate. Plays a role in control of the cell cycle, stress response, ribosome biogenesis and in those bacteria that undergo differentiation, in morphogenesis control.</text>
</comment>
<comment type="cofactor">
    <cofactor evidence="1">
        <name>Mg(2+)</name>
        <dbReference type="ChEBI" id="CHEBI:18420"/>
    </cofactor>
</comment>
<comment type="subunit">
    <text evidence="1">Monomer.</text>
</comment>
<comment type="subcellular location">
    <subcellularLocation>
        <location evidence="1">Cytoplasm</location>
    </subcellularLocation>
</comment>
<comment type="similarity">
    <text evidence="1">Belongs to the TRAFAC class OBG-HflX-like GTPase superfamily. OBG GTPase family.</text>
</comment>